<comment type="function">
    <text evidence="1">Catalyzes the NADPH-dependent reduction of L-glutamate 5-phosphate into L-glutamate 5-semialdehyde and phosphate. The product spontaneously undergoes cyclization to form 1-pyrroline-5-carboxylate.</text>
</comment>
<comment type="catalytic activity">
    <reaction evidence="1">
        <text>L-glutamate 5-semialdehyde + phosphate + NADP(+) = L-glutamyl 5-phosphate + NADPH + H(+)</text>
        <dbReference type="Rhea" id="RHEA:19541"/>
        <dbReference type="ChEBI" id="CHEBI:15378"/>
        <dbReference type="ChEBI" id="CHEBI:43474"/>
        <dbReference type="ChEBI" id="CHEBI:57783"/>
        <dbReference type="ChEBI" id="CHEBI:58066"/>
        <dbReference type="ChEBI" id="CHEBI:58274"/>
        <dbReference type="ChEBI" id="CHEBI:58349"/>
        <dbReference type="EC" id="1.2.1.41"/>
    </reaction>
</comment>
<comment type="pathway">
    <text evidence="1">Amino-acid biosynthesis; L-proline biosynthesis; L-glutamate 5-semialdehyde from L-glutamate: step 2/2.</text>
</comment>
<comment type="subcellular location">
    <subcellularLocation>
        <location evidence="1">Cytoplasm</location>
    </subcellularLocation>
</comment>
<comment type="similarity">
    <text evidence="1">Belongs to the gamma-glutamyl phosphate reductase family.</text>
</comment>
<reference key="1">
    <citation type="submission" date="2006-03" db="EMBL/GenBank/DDBJ databases">
        <title>Complete sequence of Rhodopseudomonas palustris BisB5.</title>
        <authorList>
            <consortium name="US DOE Joint Genome Institute"/>
            <person name="Copeland A."/>
            <person name="Lucas S."/>
            <person name="Lapidus A."/>
            <person name="Barry K."/>
            <person name="Detter J.C."/>
            <person name="Glavina del Rio T."/>
            <person name="Hammon N."/>
            <person name="Israni S."/>
            <person name="Dalin E."/>
            <person name="Tice H."/>
            <person name="Pitluck S."/>
            <person name="Chain P."/>
            <person name="Malfatti S."/>
            <person name="Shin M."/>
            <person name="Vergez L."/>
            <person name="Schmutz J."/>
            <person name="Larimer F."/>
            <person name="Land M."/>
            <person name="Hauser L."/>
            <person name="Pelletier D.A."/>
            <person name="Kyrpides N."/>
            <person name="Lykidis A."/>
            <person name="Oda Y."/>
            <person name="Harwood C.S."/>
            <person name="Richardson P."/>
        </authorList>
    </citation>
    <scope>NUCLEOTIDE SEQUENCE [LARGE SCALE GENOMIC DNA]</scope>
    <source>
        <strain>BisB5</strain>
    </source>
</reference>
<dbReference type="EC" id="1.2.1.41" evidence="1"/>
<dbReference type="EMBL" id="CP000283">
    <property type="protein sequence ID" value="ABE37809.1"/>
    <property type="molecule type" value="Genomic_DNA"/>
</dbReference>
<dbReference type="SMR" id="Q13DN0"/>
<dbReference type="STRING" id="316057.RPD_0571"/>
<dbReference type="KEGG" id="rpd:RPD_0571"/>
<dbReference type="eggNOG" id="COG0014">
    <property type="taxonomic scope" value="Bacteria"/>
</dbReference>
<dbReference type="HOGENOM" id="CLU_030231_0_0_5"/>
<dbReference type="BioCyc" id="RPAL316057:RPD_RS02935-MONOMER"/>
<dbReference type="UniPathway" id="UPA00098">
    <property type="reaction ID" value="UER00360"/>
</dbReference>
<dbReference type="Proteomes" id="UP000001818">
    <property type="component" value="Chromosome"/>
</dbReference>
<dbReference type="GO" id="GO:0005737">
    <property type="term" value="C:cytoplasm"/>
    <property type="evidence" value="ECO:0007669"/>
    <property type="project" value="UniProtKB-SubCell"/>
</dbReference>
<dbReference type="GO" id="GO:0004350">
    <property type="term" value="F:glutamate-5-semialdehyde dehydrogenase activity"/>
    <property type="evidence" value="ECO:0007669"/>
    <property type="project" value="UniProtKB-UniRule"/>
</dbReference>
<dbReference type="GO" id="GO:0050661">
    <property type="term" value="F:NADP binding"/>
    <property type="evidence" value="ECO:0007669"/>
    <property type="project" value="InterPro"/>
</dbReference>
<dbReference type="GO" id="GO:0055129">
    <property type="term" value="P:L-proline biosynthetic process"/>
    <property type="evidence" value="ECO:0007669"/>
    <property type="project" value="UniProtKB-UniRule"/>
</dbReference>
<dbReference type="CDD" id="cd07079">
    <property type="entry name" value="ALDH_F18-19_ProA-GPR"/>
    <property type="match status" value="1"/>
</dbReference>
<dbReference type="FunFam" id="3.40.309.10:FF:000006">
    <property type="entry name" value="Gamma-glutamyl phosphate reductase"/>
    <property type="match status" value="1"/>
</dbReference>
<dbReference type="Gene3D" id="3.40.605.10">
    <property type="entry name" value="Aldehyde Dehydrogenase, Chain A, domain 1"/>
    <property type="match status" value="1"/>
</dbReference>
<dbReference type="Gene3D" id="3.40.309.10">
    <property type="entry name" value="Aldehyde Dehydrogenase, Chain A, domain 2"/>
    <property type="match status" value="1"/>
</dbReference>
<dbReference type="HAMAP" id="MF_00412">
    <property type="entry name" value="ProA"/>
    <property type="match status" value="1"/>
</dbReference>
<dbReference type="InterPro" id="IPR016161">
    <property type="entry name" value="Ald_DH/histidinol_DH"/>
</dbReference>
<dbReference type="InterPro" id="IPR016163">
    <property type="entry name" value="Ald_DH_C"/>
</dbReference>
<dbReference type="InterPro" id="IPR016162">
    <property type="entry name" value="Ald_DH_N"/>
</dbReference>
<dbReference type="InterPro" id="IPR015590">
    <property type="entry name" value="Aldehyde_DH_dom"/>
</dbReference>
<dbReference type="InterPro" id="IPR020593">
    <property type="entry name" value="G-glutamylP_reductase_CS"/>
</dbReference>
<dbReference type="InterPro" id="IPR012134">
    <property type="entry name" value="Glu-5-SA_DH"/>
</dbReference>
<dbReference type="InterPro" id="IPR000965">
    <property type="entry name" value="GPR_dom"/>
</dbReference>
<dbReference type="NCBIfam" id="NF001221">
    <property type="entry name" value="PRK00197.1"/>
    <property type="match status" value="1"/>
</dbReference>
<dbReference type="NCBIfam" id="TIGR00407">
    <property type="entry name" value="proA"/>
    <property type="match status" value="1"/>
</dbReference>
<dbReference type="PANTHER" id="PTHR11063:SF8">
    <property type="entry name" value="DELTA-1-PYRROLINE-5-CARBOXYLATE SYNTHASE"/>
    <property type="match status" value="1"/>
</dbReference>
<dbReference type="PANTHER" id="PTHR11063">
    <property type="entry name" value="GLUTAMATE SEMIALDEHYDE DEHYDROGENASE"/>
    <property type="match status" value="1"/>
</dbReference>
<dbReference type="Pfam" id="PF00171">
    <property type="entry name" value="Aldedh"/>
    <property type="match status" value="1"/>
</dbReference>
<dbReference type="PIRSF" id="PIRSF000151">
    <property type="entry name" value="GPR"/>
    <property type="match status" value="1"/>
</dbReference>
<dbReference type="SUPFAM" id="SSF53720">
    <property type="entry name" value="ALDH-like"/>
    <property type="match status" value="1"/>
</dbReference>
<dbReference type="PROSITE" id="PS01223">
    <property type="entry name" value="PROA"/>
    <property type="match status" value="1"/>
</dbReference>
<gene>
    <name evidence="1" type="primary">proA</name>
    <name type="ordered locus">RPD_0571</name>
</gene>
<protein>
    <recommendedName>
        <fullName evidence="1">Gamma-glutamyl phosphate reductase</fullName>
        <shortName evidence="1">GPR</shortName>
        <ecNumber evidence="1">1.2.1.41</ecNumber>
    </recommendedName>
    <alternativeName>
        <fullName evidence="1">Glutamate-5-semialdehyde dehydrogenase</fullName>
    </alternativeName>
    <alternativeName>
        <fullName evidence="1">Glutamyl-gamma-semialdehyde dehydrogenase</fullName>
        <shortName evidence="1">GSA dehydrogenase</shortName>
    </alternativeName>
</protein>
<feature type="chain" id="PRO_1000049990" description="Gamma-glutamyl phosphate reductase">
    <location>
        <begin position="1"/>
        <end position="430"/>
    </location>
</feature>
<accession>Q13DN0</accession>
<sequence>MTASLKANDGSAELAALMTDLGRRARAAARVLALAPPEQKNRALEAMERAIRAGAAAILDANAEDVADAKGSGANSAFLDRLTLTPARVEAMAEGIAVVRGIADPVGAVTESWQRPNGMTIERVRVPLGVVAVIFESRPNVTADAGVLCLKSGNAVILRGGSESFRSGRAIHACLVQGLREAGLPEAAITLVPTRERAAVGLLLGGLNGTVDVIVPRGGKSLVARVESEARVPVFAHLEGINHVYVDRTADLDMAKSIVLNAKMRRTGVCGAAETLLIDRAAADTHLAPLVGMLIDAGCEVRGDDAVQRADARVKPATDQDWDTEYLDAVIAAKVVDDVDDAITHIHEHGSHHTDAIVAEDAKTAAKFLGEVDSAIVLHNASTQFADGGEFGFGAEIGIATGKFHARGPVGAEQLTTFKYRIHGTGQTRP</sequence>
<evidence type="ECO:0000255" key="1">
    <source>
        <dbReference type="HAMAP-Rule" id="MF_00412"/>
    </source>
</evidence>
<name>PROA_RHOPS</name>
<proteinExistence type="inferred from homology"/>
<keyword id="KW-0028">Amino-acid biosynthesis</keyword>
<keyword id="KW-0963">Cytoplasm</keyword>
<keyword id="KW-0521">NADP</keyword>
<keyword id="KW-0560">Oxidoreductase</keyword>
<keyword id="KW-0641">Proline biosynthesis</keyword>
<organism>
    <name type="scientific">Rhodopseudomonas palustris (strain BisB5)</name>
    <dbReference type="NCBI Taxonomy" id="316057"/>
    <lineage>
        <taxon>Bacteria</taxon>
        <taxon>Pseudomonadati</taxon>
        <taxon>Pseudomonadota</taxon>
        <taxon>Alphaproteobacteria</taxon>
        <taxon>Hyphomicrobiales</taxon>
        <taxon>Nitrobacteraceae</taxon>
        <taxon>Rhodopseudomonas</taxon>
    </lineage>
</organism>